<proteinExistence type="evidence at protein level"/>
<evidence type="ECO:0000250" key="1">
    <source>
        <dbReference type="UniProtKB" id="P00617"/>
    </source>
</evidence>
<evidence type="ECO:0000255" key="2"/>
<evidence type="ECO:0000255" key="3">
    <source>
        <dbReference type="PROSITE-ProRule" id="PRU10035"/>
    </source>
</evidence>
<evidence type="ECO:0000255" key="4">
    <source>
        <dbReference type="PROSITE-ProRule" id="PRU10036"/>
    </source>
</evidence>
<evidence type="ECO:0000269" key="5">
    <source>
    </source>
</evidence>
<evidence type="ECO:0000303" key="6">
    <source>
    </source>
</evidence>
<evidence type="ECO:0000305" key="7"/>
<dbReference type="EC" id="3.1.1.4"/>
<dbReference type="GO" id="GO:0005576">
    <property type="term" value="C:extracellular region"/>
    <property type="evidence" value="ECO:0007669"/>
    <property type="project" value="UniProtKB-SubCell"/>
</dbReference>
<dbReference type="GO" id="GO:0004623">
    <property type="term" value="F:phospholipase A2 activity"/>
    <property type="evidence" value="ECO:0007669"/>
    <property type="project" value="UniProtKB-EC"/>
</dbReference>
<dbReference type="GO" id="GO:0090729">
    <property type="term" value="F:toxin activity"/>
    <property type="evidence" value="ECO:0007669"/>
    <property type="project" value="UniProtKB-KW"/>
</dbReference>
<dbReference type="GO" id="GO:0016042">
    <property type="term" value="P:lipid catabolic process"/>
    <property type="evidence" value="ECO:0007669"/>
    <property type="project" value="UniProtKB-KW"/>
</dbReference>
<accession>P84472</accession>
<reference evidence="7" key="1">
    <citation type="journal article" date="2003" name="J. Biochem.">
        <title>Isolation, toxicity and amino terminal sequences of three major neurotoxins in the venom of Malayan krait (Bungarus candidus) from Thailand.</title>
        <authorList>
            <person name="Khow O."/>
            <person name="Chanhome L."/>
            <person name="Omori-Satoh T."/>
            <person name="Ogawa Y."/>
            <person name="Yanoshita R."/>
            <person name="Samejima Y."/>
            <person name="Kuch U."/>
            <person name="Mebs D."/>
            <person name="Sitprija V."/>
        </authorList>
    </citation>
    <scope>PROTEIN SEQUENCE</scope>
    <scope>FUNCTION</scope>
    <scope>SUBUNIT</scope>
    <scope>SUBCELLULAR LOCATION</scope>
    <scope>TISSUE SPECIFICITY</scope>
    <scope>TOXIC DOSE</scope>
    <source>
        <tissue evidence="5">Venom</tissue>
    </source>
</reference>
<name>PA2BT_BUNCA</name>
<feature type="chain" id="PRO_0000161631" description="Basic phospholipase A2 T1-2 A chain">
    <location>
        <begin position="1"/>
        <end position="14" status="greater than"/>
    </location>
</feature>
<feature type="non-terminal residue" evidence="6">
    <location>
        <position position="14"/>
    </location>
</feature>
<comment type="function">
    <text evidence="5">Snake venom phospholipase A2 (PLA2) that inhibits neuromuscular transmission by blocking acetylcholine release from the nerve termini and exhibits indirect hemolytic activity against human erythrocytes. PLA2 catalyzes the calcium-dependent hydrolysis of the 2-acyl groups in 3-sn-phosphoglycerides.</text>
</comment>
<comment type="catalytic activity">
    <reaction evidence="1 3 4">
        <text>a 1,2-diacyl-sn-glycero-3-phosphocholine + H2O = a 1-acyl-sn-glycero-3-phosphocholine + a fatty acid + H(+)</text>
        <dbReference type="Rhea" id="RHEA:15801"/>
        <dbReference type="ChEBI" id="CHEBI:15377"/>
        <dbReference type="ChEBI" id="CHEBI:15378"/>
        <dbReference type="ChEBI" id="CHEBI:28868"/>
        <dbReference type="ChEBI" id="CHEBI:57643"/>
        <dbReference type="ChEBI" id="CHEBI:58168"/>
        <dbReference type="EC" id="3.1.1.4"/>
    </reaction>
</comment>
<comment type="cofactor">
    <cofactor evidence="1">
        <name>Ca(2+)</name>
        <dbReference type="ChEBI" id="CHEBI:29108"/>
    </cofactor>
    <text evidence="1">Binds 1 Ca(2+) ion.</text>
</comment>
<comment type="subunit">
    <text evidence="5">Heterodimer; disulfide-linked. The A chains have phospholipase A2 activity and the B chains show homology with the basic protease inhibitors.</text>
</comment>
<comment type="subcellular location">
    <subcellularLocation>
        <location evidence="5">Secreted</location>
    </subcellularLocation>
</comment>
<comment type="tissue specificity">
    <text evidence="5">Expressed by the venom gland.</text>
</comment>
<comment type="toxic dose">
    <text evidence="5">LD(50) is 0.22 mg/kg by intravenous injection in mice.</text>
</comment>
<comment type="similarity">
    <text evidence="2">Belongs to the phospholipase A2 family. Group I subfamily.</text>
</comment>
<keyword id="KW-0106">Calcium</keyword>
<keyword id="KW-0903">Direct protein sequencing</keyword>
<keyword id="KW-1015">Disulfide bond</keyword>
<keyword id="KW-0378">Hydrolase</keyword>
<keyword id="KW-0442">Lipid degradation</keyword>
<keyword id="KW-0443">Lipid metabolism</keyword>
<keyword id="KW-0528">Neurotoxin</keyword>
<keyword id="KW-0638">Presynaptic neurotoxin</keyword>
<keyword id="KW-0964">Secreted</keyword>
<keyword id="KW-0800">Toxin</keyword>
<protein>
    <recommendedName>
        <fullName>Basic phospholipase A2 T1-2 A chain</fullName>
        <shortName>svPLA2</shortName>
        <ecNumber>3.1.1.4</ecNumber>
    </recommendedName>
    <alternativeName>
        <fullName>Phosphatidylcholine 2-acylhydrolase T1-2 A</fullName>
    </alternativeName>
</protein>
<organism>
    <name type="scientific">Bungarus candidus</name>
    <name type="common">Malayan krait</name>
    <dbReference type="NCBI Taxonomy" id="92438"/>
    <lineage>
        <taxon>Eukaryota</taxon>
        <taxon>Metazoa</taxon>
        <taxon>Chordata</taxon>
        <taxon>Craniata</taxon>
        <taxon>Vertebrata</taxon>
        <taxon>Euteleostomi</taxon>
        <taxon>Lepidosauria</taxon>
        <taxon>Squamata</taxon>
        <taxon>Bifurcata</taxon>
        <taxon>Unidentata</taxon>
        <taxon>Episquamata</taxon>
        <taxon>Toxicofera</taxon>
        <taxon>Serpentes</taxon>
        <taxon>Colubroidea</taxon>
        <taxon>Elapidae</taxon>
        <taxon>Bungarinae</taxon>
        <taxon>Bungarus</taxon>
    </lineage>
</organism>
<sequence length="14" mass="1816">NLYQFKEMIRYTIP</sequence>